<name>GREA_CERS1</name>
<evidence type="ECO:0000255" key="1">
    <source>
        <dbReference type="HAMAP-Rule" id="MF_00105"/>
    </source>
</evidence>
<comment type="function">
    <text evidence="1">Necessary for efficient RNA polymerase transcription elongation past template-encoded arresting sites. The arresting sites in DNA have the property of trapping a certain fraction of elongating RNA polymerases that pass through, resulting in locked ternary complexes. Cleavage of the nascent transcript by cleavage factors such as GreA or GreB allows the resumption of elongation from the new 3'terminus. GreA releases sequences of 2 to 3 nucleotides.</text>
</comment>
<comment type="similarity">
    <text evidence="1">Belongs to the GreA/GreB family.</text>
</comment>
<accession>A3PGS3</accession>
<dbReference type="EMBL" id="CP000577">
    <property type="protein sequence ID" value="ABN75539.1"/>
    <property type="molecule type" value="Genomic_DNA"/>
</dbReference>
<dbReference type="RefSeq" id="WP_002722610.1">
    <property type="nucleotide sequence ID" value="NC_009049.1"/>
</dbReference>
<dbReference type="SMR" id="A3PGS3"/>
<dbReference type="GeneID" id="67445564"/>
<dbReference type="KEGG" id="rsh:Rsph17029_0423"/>
<dbReference type="HOGENOM" id="CLU_101379_2_0_5"/>
<dbReference type="GO" id="GO:0003677">
    <property type="term" value="F:DNA binding"/>
    <property type="evidence" value="ECO:0007669"/>
    <property type="project" value="UniProtKB-UniRule"/>
</dbReference>
<dbReference type="GO" id="GO:0070063">
    <property type="term" value="F:RNA polymerase binding"/>
    <property type="evidence" value="ECO:0007669"/>
    <property type="project" value="InterPro"/>
</dbReference>
<dbReference type="GO" id="GO:0006354">
    <property type="term" value="P:DNA-templated transcription elongation"/>
    <property type="evidence" value="ECO:0007669"/>
    <property type="project" value="TreeGrafter"/>
</dbReference>
<dbReference type="GO" id="GO:0032784">
    <property type="term" value="P:regulation of DNA-templated transcription elongation"/>
    <property type="evidence" value="ECO:0007669"/>
    <property type="project" value="UniProtKB-UniRule"/>
</dbReference>
<dbReference type="FunFam" id="1.10.287.180:FF:000001">
    <property type="entry name" value="Transcription elongation factor GreA"/>
    <property type="match status" value="1"/>
</dbReference>
<dbReference type="FunFam" id="3.10.50.30:FF:000001">
    <property type="entry name" value="Transcription elongation factor GreA"/>
    <property type="match status" value="1"/>
</dbReference>
<dbReference type="Gene3D" id="3.10.50.30">
    <property type="entry name" value="Transcription elongation factor, GreA/GreB, C-terminal domain"/>
    <property type="match status" value="1"/>
</dbReference>
<dbReference type="Gene3D" id="1.10.287.180">
    <property type="entry name" value="Transcription elongation factor, GreA/GreB, N-terminal domain"/>
    <property type="match status" value="1"/>
</dbReference>
<dbReference type="HAMAP" id="MF_00105">
    <property type="entry name" value="GreA_GreB"/>
    <property type="match status" value="1"/>
</dbReference>
<dbReference type="InterPro" id="IPR036953">
    <property type="entry name" value="GreA/GreB_C_sf"/>
</dbReference>
<dbReference type="InterPro" id="IPR018151">
    <property type="entry name" value="TF_GreA/GreB_CS"/>
</dbReference>
<dbReference type="InterPro" id="IPR006359">
    <property type="entry name" value="Tscrpt_elong_fac_GreA"/>
</dbReference>
<dbReference type="InterPro" id="IPR028624">
    <property type="entry name" value="Tscrpt_elong_fac_GreA/B"/>
</dbReference>
<dbReference type="InterPro" id="IPR001437">
    <property type="entry name" value="Tscrpt_elong_fac_GreA/B_C"/>
</dbReference>
<dbReference type="InterPro" id="IPR023459">
    <property type="entry name" value="Tscrpt_elong_fac_GreA/B_fam"/>
</dbReference>
<dbReference type="InterPro" id="IPR022691">
    <property type="entry name" value="Tscrpt_elong_fac_GreA/B_N"/>
</dbReference>
<dbReference type="InterPro" id="IPR036805">
    <property type="entry name" value="Tscrpt_elong_fac_GreA/B_N_sf"/>
</dbReference>
<dbReference type="NCBIfam" id="TIGR01462">
    <property type="entry name" value="greA"/>
    <property type="match status" value="1"/>
</dbReference>
<dbReference type="NCBIfam" id="NF001261">
    <property type="entry name" value="PRK00226.1-2"/>
    <property type="match status" value="1"/>
</dbReference>
<dbReference type="NCBIfam" id="NF001263">
    <property type="entry name" value="PRK00226.1-4"/>
    <property type="match status" value="1"/>
</dbReference>
<dbReference type="NCBIfam" id="NF001264">
    <property type="entry name" value="PRK00226.1-5"/>
    <property type="match status" value="1"/>
</dbReference>
<dbReference type="PANTHER" id="PTHR30437">
    <property type="entry name" value="TRANSCRIPTION ELONGATION FACTOR GREA"/>
    <property type="match status" value="1"/>
</dbReference>
<dbReference type="PANTHER" id="PTHR30437:SF4">
    <property type="entry name" value="TRANSCRIPTION ELONGATION FACTOR GREA"/>
    <property type="match status" value="1"/>
</dbReference>
<dbReference type="Pfam" id="PF01272">
    <property type="entry name" value="GreA_GreB"/>
    <property type="match status" value="1"/>
</dbReference>
<dbReference type="Pfam" id="PF03449">
    <property type="entry name" value="GreA_GreB_N"/>
    <property type="match status" value="1"/>
</dbReference>
<dbReference type="PIRSF" id="PIRSF006092">
    <property type="entry name" value="GreA_GreB"/>
    <property type="match status" value="1"/>
</dbReference>
<dbReference type="SUPFAM" id="SSF54534">
    <property type="entry name" value="FKBP-like"/>
    <property type="match status" value="1"/>
</dbReference>
<dbReference type="SUPFAM" id="SSF46557">
    <property type="entry name" value="GreA transcript cleavage protein, N-terminal domain"/>
    <property type="match status" value="1"/>
</dbReference>
<dbReference type="PROSITE" id="PS00829">
    <property type="entry name" value="GREAB_1"/>
    <property type="match status" value="1"/>
</dbReference>
<proteinExistence type="inferred from homology"/>
<reference key="1">
    <citation type="submission" date="2007-02" db="EMBL/GenBank/DDBJ databases">
        <title>Complete sequence of chromosome 1 of Rhodobacter sphaeroides ATCC 17029.</title>
        <authorList>
            <person name="Copeland A."/>
            <person name="Lucas S."/>
            <person name="Lapidus A."/>
            <person name="Barry K."/>
            <person name="Detter J.C."/>
            <person name="Glavina del Rio T."/>
            <person name="Hammon N."/>
            <person name="Israni S."/>
            <person name="Dalin E."/>
            <person name="Tice H."/>
            <person name="Pitluck S."/>
            <person name="Kiss H."/>
            <person name="Brettin T."/>
            <person name="Bruce D."/>
            <person name="Han C."/>
            <person name="Tapia R."/>
            <person name="Gilna P."/>
            <person name="Schmutz J."/>
            <person name="Larimer F."/>
            <person name="Land M."/>
            <person name="Hauser L."/>
            <person name="Kyrpides N."/>
            <person name="Mikhailova N."/>
            <person name="Richardson P."/>
            <person name="Mackenzie C."/>
            <person name="Choudhary M."/>
            <person name="Donohue T.J."/>
            <person name="Kaplan S."/>
        </authorList>
    </citation>
    <scope>NUCLEOTIDE SEQUENCE [LARGE SCALE GENOMIC DNA]</scope>
    <source>
        <strain>ATCC 17029 / ATH 2.4.9</strain>
    </source>
</reference>
<keyword id="KW-0175">Coiled coil</keyword>
<keyword id="KW-0238">DNA-binding</keyword>
<keyword id="KW-0804">Transcription</keyword>
<keyword id="KW-0805">Transcription regulation</keyword>
<gene>
    <name evidence="1" type="primary">greA</name>
    <name type="ordered locus">Rsph17029_0423</name>
</gene>
<protein>
    <recommendedName>
        <fullName evidence="1">Transcription elongation factor GreA</fullName>
    </recommendedName>
    <alternativeName>
        <fullName evidence="1">Transcript cleavage factor GreA</fullName>
    </alternativeName>
</protein>
<organism>
    <name type="scientific">Cereibacter sphaeroides (strain ATCC 17029 / ATH 2.4.9)</name>
    <name type="common">Rhodobacter sphaeroides</name>
    <dbReference type="NCBI Taxonomy" id="349101"/>
    <lineage>
        <taxon>Bacteria</taxon>
        <taxon>Pseudomonadati</taxon>
        <taxon>Pseudomonadota</taxon>
        <taxon>Alphaproteobacteria</taxon>
        <taxon>Rhodobacterales</taxon>
        <taxon>Paracoccaceae</taxon>
        <taxon>Cereibacter</taxon>
    </lineage>
</organism>
<sequence length="156" mass="17085">MDKIPMTRAGFTALDDELKTLKTVERPAVIRSIAEAREHGDLSENAEYHAAREKQSFIEGRIKELEAILSLAEVIDPAKLSGSIKFGATVTILDEETEEERTYQIVGEAEADIEAGLLNIKSPLARALIGKDEGDSIEVKTPGGERGYEVVSVRFV</sequence>
<feature type="chain" id="PRO_1000034291" description="Transcription elongation factor GreA">
    <location>
        <begin position="1"/>
        <end position="156"/>
    </location>
</feature>
<feature type="coiled-coil region" evidence="1">
    <location>
        <begin position="46"/>
        <end position="67"/>
    </location>
</feature>